<dbReference type="EMBL" id="EF100689">
    <property type="protein sequence ID" value="ABO15829.1"/>
    <property type="molecule type" value="mRNA"/>
</dbReference>
<dbReference type="RefSeq" id="NP_001078873.1">
    <property type="nucleotide sequence ID" value="NM_001085404.1"/>
</dbReference>
<dbReference type="RefSeq" id="XP_006237515.1">
    <property type="nucleotide sequence ID" value="XM_006237453.3"/>
</dbReference>
<dbReference type="SMR" id="A4KWA8"/>
<dbReference type="FunCoup" id="A4KWA8">
    <property type="interactions" value="52"/>
</dbReference>
<dbReference type="STRING" id="10116.ENSRNOP00000069949"/>
<dbReference type="GlyCosmos" id="A4KWA8">
    <property type="glycosylation" value="1 site, No reported glycans"/>
</dbReference>
<dbReference type="GlyGen" id="A4KWA8">
    <property type="glycosylation" value="1 site"/>
</dbReference>
<dbReference type="Ensembl" id="ENSRNOT00000047790.3">
    <property type="protein sequence ID" value="ENSRNOP00000048461.2"/>
    <property type="gene ID" value="ENSRNOG00000007866.9"/>
</dbReference>
<dbReference type="GeneID" id="689790"/>
<dbReference type="KEGG" id="rno:689790"/>
<dbReference type="UCSC" id="RGD:1588698">
    <property type="organism name" value="rat"/>
</dbReference>
<dbReference type="AGR" id="RGD:1588698"/>
<dbReference type="CTD" id="689790"/>
<dbReference type="RGD" id="1588698">
    <property type="gene designation" value="LOC689790"/>
</dbReference>
<dbReference type="GeneTree" id="ENSGT00940000163004"/>
<dbReference type="InParanoid" id="A4KWA8"/>
<dbReference type="OMA" id="RESSAHN"/>
<dbReference type="OrthoDB" id="9906043at2759"/>
<dbReference type="PhylomeDB" id="A4KWA8"/>
<dbReference type="TreeFam" id="TF351467"/>
<dbReference type="PRO" id="PR:A4KWA8"/>
<dbReference type="Proteomes" id="UP000002494">
    <property type="component" value="Chromosome 4"/>
</dbReference>
<dbReference type="Bgee" id="ENSRNOG00000007866">
    <property type="expression patterns" value="Expressed in esophagus and 10 other cell types or tissues"/>
</dbReference>
<dbReference type="ExpressionAtlas" id="A4KWA8">
    <property type="expression patterns" value="baseline and differential"/>
</dbReference>
<dbReference type="GO" id="GO:0009897">
    <property type="term" value="C:external side of plasma membrane"/>
    <property type="evidence" value="ECO:0000318"/>
    <property type="project" value="GO_Central"/>
</dbReference>
<dbReference type="GO" id="GO:0030246">
    <property type="term" value="F:carbohydrate binding"/>
    <property type="evidence" value="ECO:0007669"/>
    <property type="project" value="UniProtKB-KW"/>
</dbReference>
<dbReference type="GO" id="GO:0046703">
    <property type="term" value="F:natural killer cell lectin-like receptor binding"/>
    <property type="evidence" value="ECO:0000318"/>
    <property type="project" value="GO_Central"/>
</dbReference>
<dbReference type="CDD" id="cd03593">
    <property type="entry name" value="CLECT_NK_receptors_like"/>
    <property type="match status" value="1"/>
</dbReference>
<dbReference type="Gene3D" id="3.10.100.10">
    <property type="entry name" value="Mannose-Binding Protein A, subunit A"/>
    <property type="match status" value="1"/>
</dbReference>
<dbReference type="InterPro" id="IPR001304">
    <property type="entry name" value="C-type_lectin-like"/>
</dbReference>
<dbReference type="InterPro" id="IPR016186">
    <property type="entry name" value="C-type_lectin-like/link_sf"/>
</dbReference>
<dbReference type="InterPro" id="IPR050828">
    <property type="entry name" value="C-type_lectin/matrix_domain"/>
</dbReference>
<dbReference type="InterPro" id="IPR016187">
    <property type="entry name" value="CTDL_fold"/>
</dbReference>
<dbReference type="InterPro" id="IPR033992">
    <property type="entry name" value="NKR-like_CTLD"/>
</dbReference>
<dbReference type="PANTHER" id="PTHR45710:SF19">
    <property type="entry name" value="C-TYPE LECTIN DOMAIN FAMILY 2 MEMBER D-RELATED"/>
    <property type="match status" value="1"/>
</dbReference>
<dbReference type="PANTHER" id="PTHR45710">
    <property type="entry name" value="C-TYPE LECTIN DOMAIN-CONTAINING PROTEIN 180"/>
    <property type="match status" value="1"/>
</dbReference>
<dbReference type="Pfam" id="PF00059">
    <property type="entry name" value="Lectin_C"/>
    <property type="match status" value="1"/>
</dbReference>
<dbReference type="SMART" id="SM00034">
    <property type="entry name" value="CLECT"/>
    <property type="match status" value="1"/>
</dbReference>
<dbReference type="SUPFAM" id="SSF56436">
    <property type="entry name" value="C-type lectin-like"/>
    <property type="match status" value="1"/>
</dbReference>
<dbReference type="PROSITE" id="PS50041">
    <property type="entry name" value="C_TYPE_LECTIN_2"/>
    <property type="match status" value="1"/>
</dbReference>
<evidence type="ECO:0000250" key="1"/>
<evidence type="ECO:0000255" key="2"/>
<evidence type="ECO:0000255" key="3">
    <source>
        <dbReference type="PROSITE-ProRule" id="PRU00040"/>
    </source>
</evidence>
<evidence type="ECO:0000256" key="4">
    <source>
        <dbReference type="SAM" id="MobiDB-lite"/>
    </source>
</evidence>
<keyword id="KW-1003">Cell membrane</keyword>
<keyword id="KW-0325">Glycoprotein</keyword>
<keyword id="KW-0430">Lectin</keyword>
<keyword id="KW-0472">Membrane</keyword>
<keyword id="KW-0675">Receptor</keyword>
<keyword id="KW-1185">Reference proteome</keyword>
<keyword id="KW-0735">Signal-anchor</keyword>
<keyword id="KW-0812">Transmembrane</keyword>
<keyword id="KW-1133">Transmembrane helix</keyword>
<proteinExistence type="evidence at transcript level"/>
<gene>
    <name type="primary">Clec2d6</name>
</gene>
<comment type="function">
    <text evidence="1">Lectin-type cell surface receptor.</text>
</comment>
<comment type="subcellular location">
    <subcellularLocation>
        <location evidence="1">Cell membrane</location>
        <topology evidence="1">Single-pass type II membrane protein</topology>
    </subcellularLocation>
</comment>
<feature type="chain" id="PRO_0000315295" description="C-type lectin domain family 2 member D6">
    <location>
        <begin position="1"/>
        <end position="233"/>
    </location>
</feature>
<feature type="topological domain" description="Cytoplasmic" evidence="2">
    <location>
        <begin position="1"/>
        <end position="73"/>
    </location>
</feature>
<feature type="transmembrane region" description="Helical; Signal-anchor for type II membrane protein" evidence="2">
    <location>
        <begin position="74"/>
        <end position="94"/>
    </location>
</feature>
<feature type="topological domain" description="Extracellular" evidence="2">
    <location>
        <begin position="95"/>
        <end position="233"/>
    </location>
</feature>
<feature type="domain" description="C-type lectin" evidence="3">
    <location>
        <begin position="119"/>
        <end position="230"/>
    </location>
</feature>
<feature type="region of interest" description="Disordered" evidence="4">
    <location>
        <begin position="1"/>
        <end position="45"/>
    </location>
</feature>
<feature type="compositionally biased region" description="Polar residues" evidence="4">
    <location>
        <begin position="16"/>
        <end position="29"/>
    </location>
</feature>
<feature type="compositionally biased region" description="Low complexity" evidence="4">
    <location>
        <begin position="30"/>
        <end position="43"/>
    </location>
</feature>
<feature type="glycosylation site" description="N-linked (GlcNAc...) asparagine" evidence="2">
    <location>
        <position position="132"/>
    </location>
</feature>
<organism>
    <name type="scientific">Rattus norvegicus</name>
    <name type="common">Rat</name>
    <dbReference type="NCBI Taxonomy" id="10116"/>
    <lineage>
        <taxon>Eukaryota</taxon>
        <taxon>Metazoa</taxon>
        <taxon>Chordata</taxon>
        <taxon>Craniata</taxon>
        <taxon>Vertebrata</taxon>
        <taxon>Euteleostomi</taxon>
        <taxon>Mammalia</taxon>
        <taxon>Eutheria</taxon>
        <taxon>Euarchontoglires</taxon>
        <taxon>Glires</taxon>
        <taxon>Rodentia</taxon>
        <taxon>Myomorpha</taxon>
        <taxon>Muroidea</taxon>
        <taxon>Muridae</taxon>
        <taxon>Murinae</taxon>
        <taxon>Rattus</taxon>
    </lineage>
</organism>
<sequence length="233" mass="25877">MPSSAHLQDSPPLLSRTLTQNEGQTSLRQSSSCGPSATSASESLSGYTESRIPHSEMLQEKFHGIILPESPAKLLCCCAVIVVLSVAVVALSVALSVKKTPQISTVKTYAACPRNWIGVGNKCYYFNETARNWTFSQTLCKEQEAELARFDTEEELNFLRRYKGSPGCWIGLHRESSAHNWTWTDNTAYNKLLPIRGVEKHGFLSDNGISSSRDYIKRNSICSKLNSYTSQCQ</sequence>
<protein>
    <recommendedName>
        <fullName>C-type lectin domain family 2 member D6</fullName>
    </recommendedName>
</protein>
<reference key="1">
    <citation type="journal article" date="2007" name="Immunity">
        <title>Cytomegalovirus evasion of innate immunity by subversion of the NKR-P1B:Ocil/Clr-b missing-self axis.</title>
        <authorList>
            <person name="Voigt S."/>
            <person name="Mesci A."/>
            <person name="Ettinger J."/>
            <person name="Fine J.H."/>
            <person name="Chen P."/>
            <person name="Chou W."/>
            <person name="Carlyle J.R."/>
        </authorList>
    </citation>
    <scope>NUCLEOTIDE SEQUENCE [MRNA]</scope>
    <source>
        <strain>Sprague-Dawley</strain>
    </source>
</reference>
<accession>A4KWA8</accession>
<name>CL2D6_RAT</name>